<keyword id="KW-1015">Disulfide bond</keyword>
<keyword id="KW-1185">Reference proteome</keyword>
<keyword id="KW-0964">Secreted</keyword>
<keyword id="KW-0732">Signal</keyword>
<proteinExistence type="evidence at transcript level"/>
<dbReference type="EMBL" id="AF069299">
    <property type="protein sequence ID" value="AAC19312.1"/>
    <property type="status" value="ALT_SEQ"/>
    <property type="molecule type" value="Genomic_DNA"/>
</dbReference>
<dbReference type="EMBL" id="AL161471">
    <property type="protein sequence ID" value="CAB80775.1"/>
    <property type="status" value="ALT_SEQ"/>
    <property type="molecule type" value="Genomic_DNA"/>
</dbReference>
<dbReference type="EMBL" id="CP002687">
    <property type="protein sequence ID" value="AEE81831.1"/>
    <property type="molecule type" value="Genomic_DNA"/>
</dbReference>
<dbReference type="EMBL" id="CP002687">
    <property type="protein sequence ID" value="AEE81832.1"/>
    <property type="molecule type" value="Genomic_DNA"/>
</dbReference>
<dbReference type="EMBL" id="AY093771">
    <property type="protein sequence ID" value="AAM10392.1"/>
    <property type="molecule type" value="mRNA"/>
</dbReference>
<dbReference type="EMBL" id="BT020288">
    <property type="protein sequence ID" value="AAV84509.1"/>
    <property type="molecule type" value="mRNA"/>
</dbReference>
<dbReference type="RefSeq" id="NP_001078336.1">
    <property type="nucleotide sequence ID" value="NM_001084867.1"/>
</dbReference>
<dbReference type="RefSeq" id="NP_680546.1">
    <property type="nucleotide sequence ID" value="NM_148180.3"/>
</dbReference>
<dbReference type="SMR" id="Q8RW93"/>
<dbReference type="FunCoup" id="Q8RW93">
    <property type="interactions" value="364"/>
</dbReference>
<dbReference type="GlyGen" id="Q8RW93">
    <property type="glycosylation" value="1 site"/>
</dbReference>
<dbReference type="PaxDb" id="3702-AT4G00165.1"/>
<dbReference type="ProteomicsDB" id="237126"/>
<dbReference type="EnsemblPlants" id="AT4G00165.1">
    <property type="protein sequence ID" value="AT4G00165.1"/>
    <property type="gene ID" value="AT4G00165"/>
</dbReference>
<dbReference type="EnsemblPlants" id="AT4G00165.2">
    <property type="protein sequence ID" value="AT4G00165.2"/>
    <property type="gene ID" value="AT4G00165"/>
</dbReference>
<dbReference type="GeneID" id="828076"/>
<dbReference type="Gramene" id="AT4G00165.1">
    <property type="protein sequence ID" value="AT4G00165.1"/>
    <property type="gene ID" value="AT4G00165"/>
</dbReference>
<dbReference type="Gramene" id="AT4G00165.2">
    <property type="protein sequence ID" value="AT4G00165.2"/>
    <property type="gene ID" value="AT4G00165"/>
</dbReference>
<dbReference type="KEGG" id="ath:AT4G00165"/>
<dbReference type="Araport" id="AT4G00165"/>
<dbReference type="TAIR" id="AT4G00165"/>
<dbReference type="eggNOG" id="ENOG502S1S6">
    <property type="taxonomic scope" value="Eukaryota"/>
</dbReference>
<dbReference type="HOGENOM" id="CLU_055715_1_2_1"/>
<dbReference type="InParanoid" id="Q8RW93"/>
<dbReference type="OMA" id="QAKCPKD"/>
<dbReference type="PhylomeDB" id="Q8RW93"/>
<dbReference type="PRO" id="PR:Q8RW93"/>
<dbReference type="Proteomes" id="UP000006548">
    <property type="component" value="Chromosome 4"/>
</dbReference>
<dbReference type="ExpressionAtlas" id="Q8RW93">
    <property type="expression patterns" value="baseline and differential"/>
</dbReference>
<dbReference type="GO" id="GO:0005576">
    <property type="term" value="C:extracellular region"/>
    <property type="evidence" value="ECO:0007669"/>
    <property type="project" value="UniProtKB-SubCell"/>
</dbReference>
<dbReference type="CDD" id="cd01958">
    <property type="entry name" value="HPS_like"/>
    <property type="match status" value="1"/>
</dbReference>
<dbReference type="Gene3D" id="1.10.110.10">
    <property type="entry name" value="Plant lipid-transfer and hydrophobic proteins"/>
    <property type="match status" value="1"/>
</dbReference>
<dbReference type="InterPro" id="IPR036312">
    <property type="entry name" value="Bifun_inhib/LTP/seed_sf"/>
</dbReference>
<dbReference type="InterPro" id="IPR016140">
    <property type="entry name" value="Bifunc_inhib/LTP/seed_store"/>
</dbReference>
<dbReference type="InterPro" id="IPR027923">
    <property type="entry name" value="Hydrophob_seed_dom"/>
</dbReference>
<dbReference type="InterPro" id="IPR051636">
    <property type="entry name" value="Plant_LTP/defense-related"/>
</dbReference>
<dbReference type="PANTHER" id="PTHR31731">
    <property type="match status" value="1"/>
</dbReference>
<dbReference type="Pfam" id="PF14547">
    <property type="entry name" value="Hydrophob_seed"/>
    <property type="match status" value="1"/>
</dbReference>
<dbReference type="SMART" id="SM00499">
    <property type="entry name" value="AAI"/>
    <property type="match status" value="1"/>
</dbReference>
<dbReference type="SUPFAM" id="SSF47699">
    <property type="entry name" value="Bifunctional inhibitor/lipid-transfer protein/seed storage 2S albumin"/>
    <property type="match status" value="1"/>
</dbReference>
<evidence type="ECO:0000255" key="1"/>
<evidence type="ECO:0000305" key="2"/>
<organism>
    <name type="scientific">Arabidopsis thaliana</name>
    <name type="common">Mouse-ear cress</name>
    <dbReference type="NCBI Taxonomy" id="3702"/>
    <lineage>
        <taxon>Eukaryota</taxon>
        <taxon>Viridiplantae</taxon>
        <taxon>Streptophyta</taxon>
        <taxon>Embryophyta</taxon>
        <taxon>Tracheophyta</taxon>
        <taxon>Spermatophyta</taxon>
        <taxon>Magnoliopsida</taxon>
        <taxon>eudicotyledons</taxon>
        <taxon>Gunneridae</taxon>
        <taxon>Pentapetalae</taxon>
        <taxon>rosids</taxon>
        <taxon>malvids</taxon>
        <taxon>Brassicales</taxon>
        <taxon>Brassicaceae</taxon>
        <taxon>Camelineae</taxon>
        <taxon>Arabidopsis</taxon>
    </lineage>
</organism>
<gene>
    <name type="ordered locus">At4g00165</name>
    <name type="ORF">F6N15.21</name>
</gene>
<comment type="subcellular location">
    <subcellularLocation>
        <location evidence="2">Secreted</location>
    </subcellularLocation>
</comment>
<comment type="similarity">
    <text evidence="2">Belongs to the plant LTP family. PEARLI1 subfamily.</text>
</comment>
<comment type="sequence caution" evidence="2">
    <conflict type="erroneous gene model prediction">
        <sequence resource="EMBL-CDS" id="AAC19312"/>
    </conflict>
    <text>The predicted gene has been split into 2 genes: At4g00165 and At4g00170.</text>
</comment>
<comment type="sequence caution" evidence="2">
    <conflict type="erroneous gene model prediction">
        <sequence resource="EMBL-CDS" id="CAB80775"/>
    </conflict>
    <text>The predicted gene has been split into 2 genes: At4g00165 and At4g00170.</text>
</comment>
<protein>
    <recommendedName>
        <fullName>Putative lipid-binding protein At4g00165</fullName>
    </recommendedName>
</protein>
<feature type="signal peptide" evidence="1">
    <location>
        <begin position="1"/>
        <end position="23"/>
    </location>
</feature>
<feature type="chain" id="PRO_0000402168" description="Putative lipid-binding protein At4g00165">
    <location>
        <begin position="24"/>
        <end position="128"/>
    </location>
</feature>
<feature type="disulfide bond" evidence="1">
    <location>
        <begin position="34"/>
        <end position="90"/>
    </location>
</feature>
<feature type="disulfide bond" evidence="1">
    <location>
        <begin position="46"/>
        <end position="76"/>
    </location>
</feature>
<feature type="disulfide bond" evidence="1">
    <location>
        <begin position="56"/>
        <end position="75"/>
    </location>
</feature>
<feature type="disulfide bond" evidence="1">
    <location>
        <begin position="92"/>
        <end position="128"/>
    </location>
</feature>
<accession>Q8RW93</accession>
<accession>O81318</accession>
<reference key="1">
    <citation type="journal article" date="1999" name="Nature">
        <title>Sequence and analysis of chromosome 4 of the plant Arabidopsis thaliana.</title>
        <authorList>
            <person name="Mayer K.F.X."/>
            <person name="Schueller C."/>
            <person name="Wambutt R."/>
            <person name="Murphy G."/>
            <person name="Volckaert G."/>
            <person name="Pohl T."/>
            <person name="Duesterhoeft A."/>
            <person name="Stiekema W."/>
            <person name="Entian K.-D."/>
            <person name="Terryn N."/>
            <person name="Harris B."/>
            <person name="Ansorge W."/>
            <person name="Brandt P."/>
            <person name="Grivell L.A."/>
            <person name="Rieger M."/>
            <person name="Weichselgartner M."/>
            <person name="de Simone V."/>
            <person name="Obermaier B."/>
            <person name="Mache R."/>
            <person name="Mueller M."/>
            <person name="Kreis M."/>
            <person name="Delseny M."/>
            <person name="Puigdomenech P."/>
            <person name="Watson M."/>
            <person name="Schmidtheini T."/>
            <person name="Reichert B."/>
            <person name="Portetelle D."/>
            <person name="Perez-Alonso M."/>
            <person name="Boutry M."/>
            <person name="Bancroft I."/>
            <person name="Vos P."/>
            <person name="Hoheisel J."/>
            <person name="Zimmermann W."/>
            <person name="Wedler H."/>
            <person name="Ridley P."/>
            <person name="Langham S.-A."/>
            <person name="McCullagh B."/>
            <person name="Bilham L."/>
            <person name="Robben J."/>
            <person name="van der Schueren J."/>
            <person name="Grymonprez B."/>
            <person name="Chuang Y.-J."/>
            <person name="Vandenbussche F."/>
            <person name="Braeken M."/>
            <person name="Weltjens I."/>
            <person name="Voet M."/>
            <person name="Bastiaens I."/>
            <person name="Aert R."/>
            <person name="Defoor E."/>
            <person name="Weitzenegger T."/>
            <person name="Bothe G."/>
            <person name="Ramsperger U."/>
            <person name="Hilbert H."/>
            <person name="Braun M."/>
            <person name="Holzer E."/>
            <person name="Brandt A."/>
            <person name="Peters S."/>
            <person name="van Staveren M."/>
            <person name="Dirkse W."/>
            <person name="Mooijman P."/>
            <person name="Klein Lankhorst R."/>
            <person name="Rose M."/>
            <person name="Hauf J."/>
            <person name="Koetter P."/>
            <person name="Berneiser S."/>
            <person name="Hempel S."/>
            <person name="Feldpausch M."/>
            <person name="Lamberth S."/>
            <person name="Van den Daele H."/>
            <person name="De Keyser A."/>
            <person name="Buysshaert C."/>
            <person name="Gielen J."/>
            <person name="Villarroel R."/>
            <person name="De Clercq R."/>
            <person name="van Montagu M."/>
            <person name="Rogers J."/>
            <person name="Cronin A."/>
            <person name="Quail M.A."/>
            <person name="Bray-Allen S."/>
            <person name="Clark L."/>
            <person name="Doggett J."/>
            <person name="Hall S."/>
            <person name="Kay M."/>
            <person name="Lennard N."/>
            <person name="McLay K."/>
            <person name="Mayes R."/>
            <person name="Pettett A."/>
            <person name="Rajandream M.A."/>
            <person name="Lyne M."/>
            <person name="Benes V."/>
            <person name="Rechmann S."/>
            <person name="Borkova D."/>
            <person name="Bloecker H."/>
            <person name="Scharfe M."/>
            <person name="Grimm M."/>
            <person name="Loehnert T.-H."/>
            <person name="Dose S."/>
            <person name="de Haan M."/>
            <person name="Maarse A.C."/>
            <person name="Schaefer M."/>
            <person name="Mueller-Auer S."/>
            <person name="Gabel C."/>
            <person name="Fuchs M."/>
            <person name="Fartmann B."/>
            <person name="Granderath K."/>
            <person name="Dauner D."/>
            <person name="Herzl A."/>
            <person name="Neumann S."/>
            <person name="Argiriou A."/>
            <person name="Vitale D."/>
            <person name="Liguori R."/>
            <person name="Piravandi E."/>
            <person name="Massenet O."/>
            <person name="Quigley F."/>
            <person name="Clabauld G."/>
            <person name="Muendlein A."/>
            <person name="Felber R."/>
            <person name="Schnabl S."/>
            <person name="Hiller R."/>
            <person name="Schmidt W."/>
            <person name="Lecharny A."/>
            <person name="Aubourg S."/>
            <person name="Chefdor F."/>
            <person name="Cooke R."/>
            <person name="Berger C."/>
            <person name="Monfort A."/>
            <person name="Casacuberta E."/>
            <person name="Gibbons T."/>
            <person name="Weber N."/>
            <person name="Vandenbol M."/>
            <person name="Bargues M."/>
            <person name="Terol J."/>
            <person name="Torres A."/>
            <person name="Perez-Perez A."/>
            <person name="Purnelle B."/>
            <person name="Bent E."/>
            <person name="Johnson S."/>
            <person name="Tacon D."/>
            <person name="Jesse T."/>
            <person name="Heijnen L."/>
            <person name="Schwarz S."/>
            <person name="Scholler P."/>
            <person name="Heber S."/>
            <person name="Francs P."/>
            <person name="Bielke C."/>
            <person name="Frishman D."/>
            <person name="Haase D."/>
            <person name="Lemcke K."/>
            <person name="Mewes H.-W."/>
            <person name="Stocker S."/>
            <person name="Zaccaria P."/>
            <person name="Bevan M."/>
            <person name="Wilson R.K."/>
            <person name="de la Bastide M."/>
            <person name="Habermann K."/>
            <person name="Parnell L."/>
            <person name="Dedhia N."/>
            <person name="Gnoj L."/>
            <person name="Schutz K."/>
            <person name="Huang E."/>
            <person name="Spiegel L."/>
            <person name="Sekhon M."/>
            <person name="Murray J."/>
            <person name="Sheet P."/>
            <person name="Cordes M."/>
            <person name="Abu-Threideh J."/>
            <person name="Stoneking T."/>
            <person name="Kalicki J."/>
            <person name="Graves T."/>
            <person name="Harmon G."/>
            <person name="Edwards J."/>
            <person name="Latreille P."/>
            <person name="Courtney L."/>
            <person name="Cloud J."/>
            <person name="Abbott A."/>
            <person name="Scott K."/>
            <person name="Johnson D."/>
            <person name="Minx P."/>
            <person name="Bentley D."/>
            <person name="Fulton B."/>
            <person name="Miller N."/>
            <person name="Greco T."/>
            <person name="Kemp K."/>
            <person name="Kramer J."/>
            <person name="Fulton L."/>
            <person name="Mardis E."/>
            <person name="Dante M."/>
            <person name="Pepin K."/>
            <person name="Hillier L.W."/>
            <person name="Nelson J."/>
            <person name="Spieth J."/>
            <person name="Ryan E."/>
            <person name="Andrews S."/>
            <person name="Geisel C."/>
            <person name="Layman D."/>
            <person name="Du H."/>
            <person name="Ali J."/>
            <person name="Berghoff A."/>
            <person name="Jones K."/>
            <person name="Drone K."/>
            <person name="Cotton M."/>
            <person name="Joshu C."/>
            <person name="Antonoiu B."/>
            <person name="Zidanic M."/>
            <person name="Strong C."/>
            <person name="Sun H."/>
            <person name="Lamar B."/>
            <person name="Yordan C."/>
            <person name="Ma P."/>
            <person name="Zhong J."/>
            <person name="Preston R."/>
            <person name="Vil D."/>
            <person name="Shekher M."/>
            <person name="Matero A."/>
            <person name="Shah R."/>
            <person name="Swaby I.K."/>
            <person name="O'Shaughnessy A."/>
            <person name="Rodriguez M."/>
            <person name="Hoffman J."/>
            <person name="Till S."/>
            <person name="Granat S."/>
            <person name="Shohdy N."/>
            <person name="Hasegawa A."/>
            <person name="Hameed A."/>
            <person name="Lodhi M."/>
            <person name="Johnson A."/>
            <person name="Chen E."/>
            <person name="Marra M.A."/>
            <person name="Martienssen R."/>
            <person name="McCombie W.R."/>
        </authorList>
    </citation>
    <scope>NUCLEOTIDE SEQUENCE [LARGE SCALE GENOMIC DNA]</scope>
    <source>
        <strain>cv. Columbia</strain>
    </source>
</reference>
<reference key="2">
    <citation type="journal article" date="2017" name="Plant J.">
        <title>Araport11: a complete reannotation of the Arabidopsis thaliana reference genome.</title>
        <authorList>
            <person name="Cheng C.Y."/>
            <person name="Krishnakumar V."/>
            <person name="Chan A.P."/>
            <person name="Thibaud-Nissen F."/>
            <person name="Schobel S."/>
            <person name="Town C.D."/>
        </authorList>
    </citation>
    <scope>GENOME REANNOTATION</scope>
    <source>
        <strain>cv. Columbia</strain>
    </source>
</reference>
<reference key="3">
    <citation type="journal article" date="2003" name="Science">
        <title>Empirical analysis of transcriptional activity in the Arabidopsis genome.</title>
        <authorList>
            <person name="Yamada K."/>
            <person name="Lim J."/>
            <person name="Dale J.M."/>
            <person name="Chen H."/>
            <person name="Shinn P."/>
            <person name="Palm C.J."/>
            <person name="Southwick A.M."/>
            <person name="Wu H.C."/>
            <person name="Kim C.J."/>
            <person name="Nguyen M."/>
            <person name="Pham P.K."/>
            <person name="Cheuk R.F."/>
            <person name="Karlin-Newmann G."/>
            <person name="Liu S.X."/>
            <person name="Lam B."/>
            <person name="Sakano H."/>
            <person name="Wu T."/>
            <person name="Yu G."/>
            <person name="Miranda M."/>
            <person name="Quach H.L."/>
            <person name="Tripp M."/>
            <person name="Chang C.H."/>
            <person name="Lee J.M."/>
            <person name="Toriumi M.J."/>
            <person name="Chan M.M."/>
            <person name="Tang C.C."/>
            <person name="Onodera C.S."/>
            <person name="Deng J.M."/>
            <person name="Akiyama K."/>
            <person name="Ansari Y."/>
            <person name="Arakawa T."/>
            <person name="Banh J."/>
            <person name="Banno F."/>
            <person name="Bowser L."/>
            <person name="Brooks S.Y."/>
            <person name="Carninci P."/>
            <person name="Chao Q."/>
            <person name="Choy N."/>
            <person name="Enju A."/>
            <person name="Goldsmith A.D."/>
            <person name="Gurjal M."/>
            <person name="Hansen N.F."/>
            <person name="Hayashizaki Y."/>
            <person name="Johnson-Hopson C."/>
            <person name="Hsuan V.W."/>
            <person name="Iida K."/>
            <person name="Karnes M."/>
            <person name="Khan S."/>
            <person name="Koesema E."/>
            <person name="Ishida J."/>
            <person name="Jiang P.X."/>
            <person name="Jones T."/>
            <person name="Kawai J."/>
            <person name="Kamiya A."/>
            <person name="Meyers C."/>
            <person name="Nakajima M."/>
            <person name="Narusaka M."/>
            <person name="Seki M."/>
            <person name="Sakurai T."/>
            <person name="Satou M."/>
            <person name="Tamse R."/>
            <person name="Vaysberg M."/>
            <person name="Wallender E.K."/>
            <person name="Wong C."/>
            <person name="Yamamura Y."/>
            <person name="Yuan S."/>
            <person name="Shinozaki K."/>
            <person name="Davis R.W."/>
            <person name="Theologis A."/>
            <person name="Ecker J.R."/>
        </authorList>
    </citation>
    <scope>NUCLEOTIDE SEQUENCE [LARGE SCALE MRNA]</scope>
    <source>
        <strain>cv. Columbia</strain>
    </source>
</reference>
<reference key="4">
    <citation type="submission" date="2004-12" db="EMBL/GenBank/DDBJ databases">
        <title>Arabidopsis ORF clones.</title>
        <authorList>
            <person name="Cheuk R.F."/>
            <person name="Chen H."/>
            <person name="Kim C.J."/>
            <person name="Shinn P."/>
            <person name="Ecker J.R."/>
        </authorList>
    </citation>
    <scope>NUCLEOTIDE SEQUENCE [LARGE SCALE MRNA]</scope>
    <source>
        <strain>cv. Columbia</strain>
    </source>
</reference>
<name>LBP65_ARATH</name>
<sequence length="128" mass="13338">MGISKALRSLLILLLLNITFFFGHVTPGATVKPCPPPPAKQATTKCPRDTLKFGVCGSWLGLVSEVIGTPPSQECCSLIKGLADFEAAVCLCTALKTSILGVAPVKIPVALTLLLNSCGKNVPQGFVC</sequence>